<dbReference type="EMBL" id="U48245">
    <property type="protein sequence ID" value="AAC72245.1"/>
    <property type="status" value="ALT_INIT"/>
    <property type="molecule type" value="mRNA"/>
</dbReference>
<dbReference type="EMBL" id="AY089719">
    <property type="protein sequence ID" value="AAL89577.1"/>
    <property type="status" value="ALT_INIT"/>
    <property type="molecule type" value="mRNA"/>
</dbReference>
<dbReference type="EMBL" id="EF110908">
    <property type="protein sequence ID" value="ABL61253.1"/>
    <property type="status" value="ALT_INIT"/>
    <property type="molecule type" value="mRNA"/>
</dbReference>
<dbReference type="EMBL" id="GQ376510">
    <property type="protein sequence ID" value="ACU68930.1"/>
    <property type="status" value="ALT_INIT"/>
    <property type="molecule type" value="mRNA"/>
</dbReference>
<dbReference type="EMBL" id="AABR07058759">
    <property type="status" value="NOT_ANNOTATED_CDS"/>
    <property type="molecule type" value="Genomic_DNA"/>
</dbReference>
<dbReference type="EMBL" id="AABR07058760">
    <property type="status" value="NOT_ANNOTATED_CDS"/>
    <property type="molecule type" value="Genomic_DNA"/>
</dbReference>
<dbReference type="EMBL" id="AABR07058762">
    <property type="status" value="NOT_ANNOTATED_CDS"/>
    <property type="molecule type" value="Genomic_DNA"/>
</dbReference>
<dbReference type="EMBL" id="AABR07058763">
    <property type="status" value="NOT_ANNOTATED_CDS"/>
    <property type="molecule type" value="Genomic_DNA"/>
</dbReference>
<dbReference type="EMBL" id="AABR07058764">
    <property type="status" value="NOT_ANNOTATED_CDS"/>
    <property type="molecule type" value="Genomic_DNA"/>
</dbReference>
<dbReference type="EMBL" id="AABR07058765">
    <property type="status" value="NOT_ANNOTATED_CDS"/>
    <property type="molecule type" value="Genomic_DNA"/>
</dbReference>
<dbReference type="EMBL" id="AABR07058766">
    <property type="status" value="NOT_ANNOTATED_CDS"/>
    <property type="molecule type" value="Genomic_DNA"/>
</dbReference>
<dbReference type="EMBL" id="AABR07058767">
    <property type="status" value="NOT_ANNOTATED_CDS"/>
    <property type="molecule type" value="Genomic_DNA"/>
</dbReference>
<dbReference type="EMBL" id="AABR07058768">
    <property type="status" value="NOT_ANNOTATED_CDS"/>
    <property type="molecule type" value="Genomic_DNA"/>
</dbReference>
<dbReference type="EMBL" id="AABR07058769">
    <property type="status" value="NOT_ANNOTATED_CDS"/>
    <property type="molecule type" value="Genomic_DNA"/>
</dbReference>
<dbReference type="EMBL" id="AABR07058770">
    <property type="status" value="NOT_ANNOTATED_CDS"/>
    <property type="molecule type" value="Genomic_DNA"/>
</dbReference>
<dbReference type="EMBL" id="BC093617">
    <property type="protein sequence ID" value="AAH93617.1"/>
    <property type="molecule type" value="mRNA"/>
</dbReference>
<dbReference type="RefSeq" id="NP_112332.2">
    <molecule id="Q62918-1"/>
    <property type="nucleotide sequence ID" value="NM_031070.3"/>
</dbReference>
<dbReference type="RefSeq" id="XP_008764019.1">
    <property type="nucleotide sequence ID" value="XM_008765797.2"/>
</dbReference>
<dbReference type="RefSeq" id="XP_008764020.1">
    <molecule id="Q62918-1"/>
    <property type="nucleotide sequence ID" value="XM_008765798.2"/>
</dbReference>
<dbReference type="SMR" id="Q62918"/>
<dbReference type="FunCoup" id="Q62918">
    <property type="interactions" value="1501"/>
</dbReference>
<dbReference type="STRING" id="10116.ENSRNOP00000008985"/>
<dbReference type="GlyCosmos" id="Q62918">
    <property type="glycosylation" value="7 sites, No reported glycans"/>
</dbReference>
<dbReference type="GlyGen" id="Q62918">
    <property type="glycosylation" value="8 sites"/>
</dbReference>
<dbReference type="PhosphoSitePlus" id="Q62918"/>
<dbReference type="PaxDb" id="10116-ENSRNOP00000008985"/>
<dbReference type="Ensembl" id="ENSRNOT00000008985.8">
    <molecule id="Q62918-1"/>
    <property type="protein sequence ID" value="ENSRNOP00000008985.5"/>
    <property type="gene ID" value="ENSRNOG00000006235.8"/>
</dbReference>
<dbReference type="GeneID" id="81734"/>
<dbReference type="KEGG" id="rno:81734"/>
<dbReference type="UCSC" id="RGD:620999">
    <molecule id="Q62918-1"/>
    <property type="organism name" value="rat"/>
</dbReference>
<dbReference type="AGR" id="RGD:620999"/>
<dbReference type="CTD" id="4753"/>
<dbReference type="RGD" id="620999">
    <property type="gene designation" value="Nell2"/>
</dbReference>
<dbReference type="eggNOG" id="KOG1217">
    <property type="taxonomic scope" value="Eukaryota"/>
</dbReference>
<dbReference type="GeneTree" id="ENSGT00810000125439"/>
<dbReference type="HOGENOM" id="CLU_006887_0_0_1"/>
<dbReference type="InParanoid" id="Q62918"/>
<dbReference type="OrthoDB" id="212at9989"/>
<dbReference type="PhylomeDB" id="Q62918"/>
<dbReference type="TreeFam" id="TF323325"/>
<dbReference type="PRO" id="PR:Q62918"/>
<dbReference type="Proteomes" id="UP000002494">
    <property type="component" value="Chromosome 7"/>
</dbReference>
<dbReference type="Bgee" id="ENSRNOG00000006235">
    <property type="expression patterns" value="Expressed in frontal cortex and 12 other cell types or tissues"/>
</dbReference>
<dbReference type="GO" id="GO:0005737">
    <property type="term" value="C:cytoplasm"/>
    <property type="evidence" value="ECO:0000314"/>
    <property type="project" value="UniProtKB"/>
</dbReference>
<dbReference type="GO" id="GO:0030425">
    <property type="term" value="C:dendrite"/>
    <property type="evidence" value="ECO:0000314"/>
    <property type="project" value="RGD"/>
</dbReference>
<dbReference type="GO" id="GO:0005576">
    <property type="term" value="C:extracellular region"/>
    <property type="evidence" value="ECO:0000266"/>
    <property type="project" value="RGD"/>
</dbReference>
<dbReference type="GO" id="GO:0005615">
    <property type="term" value="C:extracellular space"/>
    <property type="evidence" value="ECO:0000314"/>
    <property type="project" value="UniProtKB"/>
</dbReference>
<dbReference type="GO" id="GO:0043204">
    <property type="term" value="C:perikaryon"/>
    <property type="evidence" value="ECO:0000314"/>
    <property type="project" value="RGD"/>
</dbReference>
<dbReference type="GO" id="GO:0005509">
    <property type="term" value="F:calcium ion binding"/>
    <property type="evidence" value="ECO:0000250"/>
    <property type="project" value="UniProtKB"/>
</dbReference>
<dbReference type="GO" id="GO:0008201">
    <property type="term" value="F:heparin binding"/>
    <property type="evidence" value="ECO:0000314"/>
    <property type="project" value="RGD"/>
</dbReference>
<dbReference type="GO" id="GO:0042802">
    <property type="term" value="F:identical protein binding"/>
    <property type="evidence" value="ECO:0000353"/>
    <property type="project" value="RGD"/>
</dbReference>
<dbReference type="GO" id="GO:0005080">
    <property type="term" value="F:protein kinase C binding"/>
    <property type="evidence" value="ECO:0000314"/>
    <property type="project" value="RGD"/>
</dbReference>
<dbReference type="GO" id="GO:0071679">
    <property type="term" value="P:commissural neuron axon guidance"/>
    <property type="evidence" value="ECO:0000250"/>
    <property type="project" value="UniProtKB"/>
</dbReference>
<dbReference type="GO" id="GO:0046543">
    <property type="term" value="P:development of secondary female sexual characteristics"/>
    <property type="evidence" value="ECO:0000315"/>
    <property type="project" value="UniProtKB"/>
</dbReference>
<dbReference type="GO" id="GO:0009566">
    <property type="term" value="P:fertilization"/>
    <property type="evidence" value="ECO:0000250"/>
    <property type="project" value="UniProtKB"/>
</dbReference>
<dbReference type="GO" id="GO:0022008">
    <property type="term" value="P:neurogenesis"/>
    <property type="evidence" value="ECO:0000315"/>
    <property type="project" value="UniProtKB"/>
</dbReference>
<dbReference type="GO" id="GO:0070050">
    <property type="term" value="P:neuron cellular homeostasis"/>
    <property type="evidence" value="ECO:0000314"/>
    <property type="project" value="UniProtKB"/>
</dbReference>
<dbReference type="GO" id="GO:0046887">
    <property type="term" value="P:positive regulation of hormone secretion"/>
    <property type="evidence" value="ECO:0000315"/>
    <property type="project" value="UniProtKB"/>
</dbReference>
<dbReference type="GO" id="GO:0040008">
    <property type="term" value="P:regulation of growth"/>
    <property type="evidence" value="ECO:0000314"/>
    <property type="project" value="RGD"/>
</dbReference>
<dbReference type="CDD" id="cd00054">
    <property type="entry name" value="EGF_CA"/>
    <property type="match status" value="3"/>
</dbReference>
<dbReference type="CDD" id="cd00110">
    <property type="entry name" value="LamG"/>
    <property type="match status" value="1"/>
</dbReference>
<dbReference type="FunFam" id="2.10.25.10:FF:000121">
    <property type="entry name" value="Neural EGFL like 2"/>
    <property type="match status" value="1"/>
</dbReference>
<dbReference type="FunFam" id="2.10.25.10:FF:000120">
    <property type="entry name" value="Protein kinase C-binding protein NELL1"/>
    <property type="match status" value="1"/>
</dbReference>
<dbReference type="FunFam" id="2.10.25.10:FF:000211">
    <property type="entry name" value="Protein kinase C-binding protein NELL1"/>
    <property type="match status" value="1"/>
</dbReference>
<dbReference type="FunFam" id="2.60.120.200:FF:000015">
    <property type="entry name" value="protein kinase C-binding protein NELL1"/>
    <property type="match status" value="1"/>
</dbReference>
<dbReference type="FunFam" id="2.10.25.10:FF:000102">
    <property type="entry name" value="Protein kinase C-binding protein NELL2"/>
    <property type="match status" value="1"/>
</dbReference>
<dbReference type="FunFam" id="2.10.25.10:FF:000111">
    <property type="entry name" value="Protein kinase C-binding protein NELL2"/>
    <property type="match status" value="1"/>
</dbReference>
<dbReference type="FunFam" id="2.10.70.10:FF:000023">
    <property type="entry name" value="protein kinase C-binding protein NELL2"/>
    <property type="match status" value="1"/>
</dbReference>
<dbReference type="Gene3D" id="2.60.120.200">
    <property type="match status" value="1"/>
</dbReference>
<dbReference type="Gene3D" id="6.20.200.20">
    <property type="match status" value="2"/>
</dbReference>
<dbReference type="Gene3D" id="2.10.70.10">
    <property type="entry name" value="Complement Module, domain 1"/>
    <property type="match status" value="1"/>
</dbReference>
<dbReference type="Gene3D" id="2.10.25.10">
    <property type="entry name" value="Laminin"/>
    <property type="match status" value="6"/>
</dbReference>
<dbReference type="InterPro" id="IPR013320">
    <property type="entry name" value="ConA-like_dom_sf"/>
</dbReference>
<dbReference type="InterPro" id="IPR001881">
    <property type="entry name" value="EGF-like_Ca-bd_dom"/>
</dbReference>
<dbReference type="InterPro" id="IPR000742">
    <property type="entry name" value="EGF-like_dom"/>
</dbReference>
<dbReference type="InterPro" id="IPR000152">
    <property type="entry name" value="EGF-type_Asp/Asn_hydroxyl_site"/>
</dbReference>
<dbReference type="InterPro" id="IPR018097">
    <property type="entry name" value="EGF_Ca-bd_CS"/>
</dbReference>
<dbReference type="InterPro" id="IPR024731">
    <property type="entry name" value="EGF_dom"/>
</dbReference>
<dbReference type="InterPro" id="IPR009030">
    <property type="entry name" value="Growth_fac_rcpt_cys_sf"/>
</dbReference>
<dbReference type="InterPro" id="IPR001791">
    <property type="entry name" value="Laminin_G"/>
</dbReference>
<dbReference type="InterPro" id="IPR049883">
    <property type="entry name" value="NOTCH1_EGF-like"/>
</dbReference>
<dbReference type="InterPro" id="IPR051586">
    <property type="entry name" value="PKC-binding_NELL"/>
</dbReference>
<dbReference type="InterPro" id="IPR048287">
    <property type="entry name" value="TSPN-like_N"/>
</dbReference>
<dbReference type="InterPro" id="IPR001007">
    <property type="entry name" value="VWF_dom"/>
</dbReference>
<dbReference type="PANTHER" id="PTHR24042">
    <property type="entry name" value="NEL HOMOLOG"/>
    <property type="match status" value="1"/>
</dbReference>
<dbReference type="PANTHER" id="PTHR24042:SF0">
    <property type="entry name" value="PROTEIN KINASE C-BINDING PROTEIN NELL2"/>
    <property type="match status" value="1"/>
</dbReference>
<dbReference type="Pfam" id="PF12947">
    <property type="entry name" value="EGF_3"/>
    <property type="match status" value="1"/>
</dbReference>
<dbReference type="Pfam" id="PF07645">
    <property type="entry name" value="EGF_CA"/>
    <property type="match status" value="3"/>
</dbReference>
<dbReference type="Pfam" id="PF02210">
    <property type="entry name" value="Laminin_G_2"/>
    <property type="match status" value="1"/>
</dbReference>
<dbReference type="Pfam" id="PF00093">
    <property type="entry name" value="VWC"/>
    <property type="match status" value="2"/>
</dbReference>
<dbReference type="SMART" id="SM00181">
    <property type="entry name" value="EGF"/>
    <property type="match status" value="6"/>
</dbReference>
<dbReference type="SMART" id="SM00179">
    <property type="entry name" value="EGF_CA"/>
    <property type="match status" value="5"/>
</dbReference>
<dbReference type="SMART" id="SM00282">
    <property type="entry name" value="LamG"/>
    <property type="match status" value="1"/>
</dbReference>
<dbReference type="SMART" id="SM00210">
    <property type="entry name" value="TSPN"/>
    <property type="match status" value="1"/>
</dbReference>
<dbReference type="SMART" id="SM00214">
    <property type="entry name" value="VWC"/>
    <property type="match status" value="3"/>
</dbReference>
<dbReference type="SMART" id="SM00215">
    <property type="entry name" value="VWC_out"/>
    <property type="match status" value="2"/>
</dbReference>
<dbReference type="SUPFAM" id="SSF49899">
    <property type="entry name" value="Concanavalin A-like lectins/glucanases"/>
    <property type="match status" value="1"/>
</dbReference>
<dbReference type="SUPFAM" id="SSF57196">
    <property type="entry name" value="EGF/Laminin"/>
    <property type="match status" value="2"/>
</dbReference>
<dbReference type="SUPFAM" id="SSF57603">
    <property type="entry name" value="FnI-like domain"/>
    <property type="match status" value="2"/>
</dbReference>
<dbReference type="SUPFAM" id="SSF57184">
    <property type="entry name" value="Growth factor receptor domain"/>
    <property type="match status" value="1"/>
</dbReference>
<dbReference type="PROSITE" id="PS00010">
    <property type="entry name" value="ASX_HYDROXYL"/>
    <property type="match status" value="3"/>
</dbReference>
<dbReference type="PROSITE" id="PS00022">
    <property type="entry name" value="EGF_1"/>
    <property type="match status" value="1"/>
</dbReference>
<dbReference type="PROSITE" id="PS01186">
    <property type="entry name" value="EGF_2"/>
    <property type="match status" value="4"/>
</dbReference>
<dbReference type="PROSITE" id="PS50026">
    <property type="entry name" value="EGF_3"/>
    <property type="match status" value="6"/>
</dbReference>
<dbReference type="PROSITE" id="PS01187">
    <property type="entry name" value="EGF_CA"/>
    <property type="match status" value="3"/>
</dbReference>
<dbReference type="PROSITE" id="PS01208">
    <property type="entry name" value="VWFC_1"/>
    <property type="match status" value="2"/>
</dbReference>
<dbReference type="PROSITE" id="PS50184">
    <property type="entry name" value="VWFC_2"/>
    <property type="match status" value="3"/>
</dbReference>
<reference key="1">
    <citation type="journal article" date="1999" name="Biochem. Biophys. Res. Commun.">
        <title>Biochemical characterization and expression analysis of neural thrombospondin-1-like proteins NELL1 and NELL2.</title>
        <authorList>
            <person name="Kuroda S."/>
            <person name="Oyasu M."/>
            <person name="Kawakami M."/>
            <person name="Kanayama N."/>
            <person name="Tanizawa K."/>
            <person name="Saito N."/>
            <person name="Abe T."/>
            <person name="Matsuhashi S."/>
            <person name="Ting K."/>
        </authorList>
    </citation>
    <scope>NUCLEOTIDE SEQUENCE [MRNA]</scope>
    <scope>SUBUNIT</scope>
    <scope>SUBCELLULAR LOCATION</scope>
    <source>
        <strain>Sprague-Dawley</strain>
        <tissue>Brain</tissue>
    </source>
</reference>
<reference key="2">
    <citation type="submission" date="2002-03" db="EMBL/GenBank/DDBJ databases">
        <title>Ontogeny and a possible role of a novel epidermal growth factor-like repeat domain-containing protein, NELL2 in the rat brain.</title>
        <authorList>
            <person name="Lee B.J."/>
            <person name="Kim H."/>
            <person name="Ha C.M."/>
            <person name="Choi E.J."/>
            <person name="Jeon J."/>
            <person name="Kim C."/>
            <person name="Park S.K."/>
            <person name="Kang S.S."/>
            <person name="Kim K."/>
        </authorList>
    </citation>
    <scope>NUCLEOTIDE SEQUENCE [MRNA]</scope>
    <source>
        <strain>Sprague-Dawley</strain>
    </source>
</reference>
<reference key="3">
    <citation type="journal article" date="2010" name="Biochem. Biophys. Res. Commun.">
        <title>Identification and characterization of a truncated isoform of NELL2.</title>
        <authorList>
            <person name="Kim D.G."/>
            <person name="Hwang E.M."/>
            <person name="Yoo J.C."/>
            <person name="Kim E."/>
            <person name="Park N."/>
            <person name="Rhee S."/>
            <person name="Ha C.M."/>
            <person name="Hong S.G."/>
            <person name="Park J.Y."/>
        </authorList>
    </citation>
    <scope>NUCLEOTIDE SEQUENCE [MRNA] (ISOFORM 3)</scope>
    <scope>SUBCELLULAR LOCATION (ISOFORM 3)</scope>
</reference>
<reference key="4">
    <citation type="journal article" date="2004" name="Nature">
        <title>Genome sequence of the Brown Norway rat yields insights into mammalian evolution.</title>
        <authorList>
            <person name="Gibbs R.A."/>
            <person name="Weinstock G.M."/>
            <person name="Metzker M.L."/>
            <person name="Muzny D.M."/>
            <person name="Sodergren E.J."/>
            <person name="Scherer S."/>
            <person name="Scott G."/>
            <person name="Steffen D."/>
            <person name="Worley K.C."/>
            <person name="Burch P.E."/>
            <person name="Okwuonu G."/>
            <person name="Hines S."/>
            <person name="Lewis L."/>
            <person name="Deramo C."/>
            <person name="Delgado O."/>
            <person name="Dugan-Rocha S."/>
            <person name="Miner G."/>
            <person name="Morgan M."/>
            <person name="Hawes A."/>
            <person name="Gill R."/>
            <person name="Holt R.A."/>
            <person name="Adams M.D."/>
            <person name="Amanatides P.G."/>
            <person name="Baden-Tillson H."/>
            <person name="Barnstead M."/>
            <person name="Chin S."/>
            <person name="Evans C.A."/>
            <person name="Ferriera S."/>
            <person name="Fosler C."/>
            <person name="Glodek A."/>
            <person name="Gu Z."/>
            <person name="Jennings D."/>
            <person name="Kraft C.L."/>
            <person name="Nguyen T."/>
            <person name="Pfannkoch C.M."/>
            <person name="Sitter C."/>
            <person name="Sutton G.G."/>
            <person name="Venter J.C."/>
            <person name="Woodage T."/>
            <person name="Smith D."/>
            <person name="Lee H.-M."/>
            <person name="Gustafson E."/>
            <person name="Cahill P."/>
            <person name="Kana A."/>
            <person name="Doucette-Stamm L."/>
            <person name="Weinstock K."/>
            <person name="Fechtel K."/>
            <person name="Weiss R.B."/>
            <person name="Dunn D.M."/>
            <person name="Green E.D."/>
            <person name="Blakesley R.W."/>
            <person name="Bouffard G.G."/>
            <person name="De Jong P.J."/>
            <person name="Osoegawa K."/>
            <person name="Zhu B."/>
            <person name="Marra M."/>
            <person name="Schein J."/>
            <person name="Bosdet I."/>
            <person name="Fjell C."/>
            <person name="Jones S."/>
            <person name="Krzywinski M."/>
            <person name="Mathewson C."/>
            <person name="Siddiqui A."/>
            <person name="Wye N."/>
            <person name="McPherson J."/>
            <person name="Zhao S."/>
            <person name="Fraser C.M."/>
            <person name="Shetty J."/>
            <person name="Shatsman S."/>
            <person name="Geer K."/>
            <person name="Chen Y."/>
            <person name="Abramzon S."/>
            <person name="Nierman W.C."/>
            <person name="Havlak P.H."/>
            <person name="Chen R."/>
            <person name="Durbin K.J."/>
            <person name="Egan A."/>
            <person name="Ren Y."/>
            <person name="Song X.-Z."/>
            <person name="Li B."/>
            <person name="Liu Y."/>
            <person name="Qin X."/>
            <person name="Cawley S."/>
            <person name="Cooney A.J."/>
            <person name="D'Souza L.M."/>
            <person name="Martin K."/>
            <person name="Wu J.Q."/>
            <person name="Gonzalez-Garay M.L."/>
            <person name="Jackson A.R."/>
            <person name="Kalafus K.J."/>
            <person name="McLeod M.P."/>
            <person name="Milosavljevic A."/>
            <person name="Virk D."/>
            <person name="Volkov A."/>
            <person name="Wheeler D.A."/>
            <person name="Zhang Z."/>
            <person name="Bailey J.A."/>
            <person name="Eichler E.E."/>
            <person name="Tuzun E."/>
            <person name="Birney E."/>
            <person name="Mongin E."/>
            <person name="Ureta-Vidal A."/>
            <person name="Woodwark C."/>
            <person name="Zdobnov E."/>
            <person name="Bork P."/>
            <person name="Suyama M."/>
            <person name="Torrents D."/>
            <person name="Alexandersson M."/>
            <person name="Trask B.J."/>
            <person name="Young J.M."/>
            <person name="Huang H."/>
            <person name="Wang H."/>
            <person name="Xing H."/>
            <person name="Daniels S."/>
            <person name="Gietzen D."/>
            <person name="Schmidt J."/>
            <person name="Stevens K."/>
            <person name="Vitt U."/>
            <person name="Wingrove J."/>
            <person name="Camara F."/>
            <person name="Mar Alba M."/>
            <person name="Abril J.F."/>
            <person name="Guigo R."/>
            <person name="Smit A."/>
            <person name="Dubchak I."/>
            <person name="Rubin E.M."/>
            <person name="Couronne O."/>
            <person name="Poliakov A."/>
            <person name="Huebner N."/>
            <person name="Ganten D."/>
            <person name="Goesele C."/>
            <person name="Hummel O."/>
            <person name="Kreitler T."/>
            <person name="Lee Y.-A."/>
            <person name="Monti J."/>
            <person name="Schulz H."/>
            <person name="Zimdahl H."/>
            <person name="Himmelbauer H."/>
            <person name="Lehrach H."/>
            <person name="Jacob H.J."/>
            <person name="Bromberg S."/>
            <person name="Gullings-Handley J."/>
            <person name="Jensen-Seaman M.I."/>
            <person name="Kwitek A.E."/>
            <person name="Lazar J."/>
            <person name="Pasko D."/>
            <person name="Tonellato P.J."/>
            <person name="Twigger S."/>
            <person name="Ponting C.P."/>
            <person name="Duarte J.M."/>
            <person name="Rice S."/>
            <person name="Goodstadt L."/>
            <person name="Beatson S.A."/>
            <person name="Emes R.D."/>
            <person name="Winter E.E."/>
            <person name="Webber C."/>
            <person name="Brandt P."/>
            <person name="Nyakatura G."/>
            <person name="Adetobi M."/>
            <person name="Chiaromonte F."/>
            <person name="Elnitski L."/>
            <person name="Eswara P."/>
            <person name="Hardison R.C."/>
            <person name="Hou M."/>
            <person name="Kolbe D."/>
            <person name="Makova K."/>
            <person name="Miller W."/>
            <person name="Nekrutenko A."/>
            <person name="Riemer C."/>
            <person name="Schwartz S."/>
            <person name="Taylor J."/>
            <person name="Yang S."/>
            <person name="Zhang Y."/>
            <person name="Lindpaintner K."/>
            <person name="Andrews T.D."/>
            <person name="Caccamo M."/>
            <person name="Clamp M."/>
            <person name="Clarke L."/>
            <person name="Curwen V."/>
            <person name="Durbin R.M."/>
            <person name="Eyras E."/>
            <person name="Searle S.M."/>
            <person name="Cooper G.M."/>
            <person name="Batzoglou S."/>
            <person name="Brudno M."/>
            <person name="Sidow A."/>
            <person name="Stone E.A."/>
            <person name="Payseur B.A."/>
            <person name="Bourque G."/>
            <person name="Lopez-Otin C."/>
            <person name="Puente X.S."/>
            <person name="Chakrabarti K."/>
            <person name="Chatterji S."/>
            <person name="Dewey C."/>
            <person name="Pachter L."/>
            <person name="Bray N."/>
            <person name="Yap V.B."/>
            <person name="Caspi A."/>
            <person name="Tesler G."/>
            <person name="Pevzner P.A."/>
            <person name="Haussler D."/>
            <person name="Roskin K.M."/>
            <person name="Baertsch R."/>
            <person name="Clawson H."/>
            <person name="Furey T.S."/>
            <person name="Hinrichs A.S."/>
            <person name="Karolchik D."/>
            <person name="Kent W.J."/>
            <person name="Rosenbloom K.R."/>
            <person name="Trumbower H."/>
            <person name="Weirauch M."/>
            <person name="Cooper D.N."/>
            <person name="Stenson P.D."/>
            <person name="Ma B."/>
            <person name="Brent M."/>
            <person name="Arumugam M."/>
            <person name="Shteynberg D."/>
            <person name="Copley R.R."/>
            <person name="Taylor M.S."/>
            <person name="Riethman H."/>
            <person name="Mudunuri U."/>
            <person name="Peterson J."/>
            <person name="Guyer M."/>
            <person name="Felsenfeld A."/>
            <person name="Old S."/>
            <person name="Mockrin S."/>
            <person name="Collins F.S."/>
        </authorList>
    </citation>
    <scope>NUCLEOTIDE SEQUENCE [LARGE SCALE GENOMIC DNA]</scope>
    <source>
        <strain>Brown Norway</strain>
    </source>
</reference>
<reference key="5">
    <citation type="journal article" date="2004" name="Genome Res.">
        <title>The status, quality, and expansion of the NIH full-length cDNA project: the Mammalian Gene Collection (MGC).</title>
        <authorList>
            <consortium name="The MGC Project Team"/>
        </authorList>
    </citation>
    <scope>NUCLEOTIDE SEQUENCE [LARGE SCALE MRNA]</scope>
    <source>
        <tissue>Brain</tissue>
    </source>
</reference>
<reference key="6">
    <citation type="journal article" date="2007" name="Biochem. Biophys. Res. Commun.">
        <title>Alternative splicing generates a novel non-secretable cytosolic isoform of NELL2.</title>
        <authorList>
            <person name="Hwang E.M."/>
            <person name="Kim D.G."/>
            <person name="Lee B.J."/>
            <person name="Choi J."/>
            <person name="Kim E."/>
            <person name="Park N."/>
            <person name="Kang D."/>
            <person name="Han J."/>
            <person name="Choi W.S."/>
            <person name="Hong S.G."/>
            <person name="Park J.Y."/>
        </authorList>
    </citation>
    <scope>NUCLEOTIDE SEQUENCE [MRNA] (ISOFORM 2)</scope>
    <scope>SUBCELLULAR LOCATION (ISOFORM 2)</scope>
    <scope>TISSUE SPECIFICITY (ISOFORM 2)</scope>
    <scope>INTERACTION WITH PRKCB (ISOFORM 2)</scope>
</reference>
<reference key="7">
    <citation type="journal article" date="1999" name="Biochem. Biophys. Res. Commun.">
        <title>Involvement of epidermal growth factor-like domain of NELL proteins in the novel protein-protein interaction with protein kinase C.</title>
        <authorList>
            <person name="Kuroda S."/>
            <person name="Tanizawa K."/>
        </authorList>
    </citation>
    <scope>PHOSPHORYLATION</scope>
    <scope>SUBUNIT</scope>
    <scope>INTERACTION WITH PRKCB</scope>
</reference>
<reference key="8">
    <citation type="journal article" date="2003" name="Brain Res. Mol. Brain Res.">
        <title>A neuron-specific EGF family protein, NELL2, promotes survival of neurons through mitogen-activated protein kinases.</title>
        <authorList>
            <person name="Aihara K."/>
            <person name="Kuroda S."/>
            <person name="Kanayama N."/>
            <person name="Matsuyama S."/>
            <person name="Tanizawa K."/>
            <person name="Horie M."/>
        </authorList>
    </citation>
    <scope>FUNCTION</scope>
</reference>
<reference key="9">
    <citation type="journal article" date="2008" name="Neuroendocrinology">
        <title>NELL2, a neuron-specific EGF-like protein, is selectively expressed in glutamatergic neurons and contributes to the glutamatergic control of GnRH neurons at puberty.</title>
        <authorList>
            <person name="Ha C.M."/>
            <person name="Choi J."/>
            <person name="Choi E.J."/>
            <person name="Costa M.E."/>
            <person name="Lee B.J."/>
            <person name="Ojeda S.R."/>
        </authorList>
    </citation>
    <scope>FUNCTION</scope>
    <scope>TISSUE SPECIFICITY</scope>
    <scope>SUBCELLULAR LOCATION</scope>
</reference>
<reference key="10">
    <citation type="journal article" date="2014" name="Biochem. Biophys. Res. Commun.">
        <title>The cytosolic splicing variant of NELL2 inhibits PKCbeta1 in glial cells.</title>
        <authorList>
            <person name="Lee D.Y."/>
            <person name="Kim E."/>
            <person name="Lee Y.S."/>
            <person name="Ryu H."/>
            <person name="Park J.Y."/>
            <person name="Hwang E.M."/>
        </authorList>
    </citation>
    <scope>FUNCTION (ISOFORM 2)</scope>
    <scope>INTERACTION WITH PRKCB (ISOFORM 2)</scope>
    <scope>TISSUE SPECIFICITY</scope>
</reference>
<reference key="11">
    <citation type="journal article" date="2020" name="Mol. Cells">
        <title>NELL2 Function in Axon Development of Hippocampal Neurons.</title>
        <authorList>
            <person name="Kim H.R."/>
            <person name="Kim D.H."/>
            <person name="An J.Y."/>
            <person name="Kang D."/>
            <person name="Park J.W."/>
            <person name="Hwang E.M."/>
            <person name="Seo E.J."/>
            <person name="Jang I.H."/>
            <person name="Ha C.M."/>
            <person name="Lee B.J."/>
        </authorList>
    </citation>
    <scope>FUNCTION</scope>
</reference>
<sequence length="819" mass="91334">MHAMESRVLLRTFCVILGLEAVWGLGVDPSLQIDVLSELELGESTAGVRQVPGLHNGTKAFLFQDSPRSIKAPIATAERFFQKLRNKHEFTILVTLKQIHLNSGVILSIHHLDHRYLELESSGHRNEIRLHYRSGTHRPHTEVFPYILADAKWHKLSLAFSASHLILHIDCNKIYERVVEMPSTDLPLGTTFWLGQRNNAHGYFKGIMQDVQLLVMPQGFIAQCPDLNRTCPTCNDFHGLVQKIMELQDILSKTSAKLSRAEQRMNRLDQCYCERTCTMKGTTYREFESWTDGCKNCTCLNGTIQCETLVCPAPDCPAKSAPAYVDGKCCKECKSTCQFQGRSYFEGERSTVFSASGMCVLYECKDQTMKLVENAGCPALDCPESHQIALSHSCCKVCKGYDFCSEKHTCMENSVCRNLNDRAVCSCRDGFRALREDNAYCEDIDECAEGRHYCRENTMCVNTPGSFLCICQTGYIRIDDYSCTEHDECLTNQHNCDENALCFNTVGGHNCVCKPGYTGNGTTCKAFCKDGCRNGGACIAANVCACPQGFTGPSCETDIDECSEGFVQCDSRANCINLPGWYHCECRDGYHDNGMFAPGGESCEDIDECGTGRHSCANDTICFNLDGGYDCRCPHGKNCTGDCVHDGKVKHNGQIWVLENDRCSVCSCQTGFVMCRRMVCDCENPTVDLSCCPECDPRLSSQCLHQNGETVYNSGDTWVQDCRQCRCLQGEVDCWPLACPEVECEFSVLPENECCPRCVTDPCQADTIRNDITKTCLDEMNVVRFTGSSWIKHGTECTLCQCKNGHVCCSVDPQCLQEL</sequence>
<accession>Q62918</accession>
<accession>A1E5S7</accession>
<accession>C8CB44</accession>
<accession>Q561K2</accession>
<accession>Q8R417</accession>
<name>NELL2_RAT</name>
<protein>
    <recommendedName>
        <fullName>Protein kinase C-binding protein NELL2</fullName>
    </recommendedName>
    <alternativeName>
        <fullName>NEL-like protein 2</fullName>
    </alternativeName>
</protein>
<comment type="function">
    <text evidence="1 9 11 14">Plays multiple roles In neural tissues, regulates neuronal proliferation, survival, differentiation, polarization, as well as axon guidance and synaptic functions (PubMed:12941464, PubMed:18547942, PubMed:32597395). Plays an important role in axon development during neuronal differentiation through the MAPK intracellular signaling pathway (PubMed:32597395). Via binding to its receptor ROBO3, plays a role in axon guidance, functioning as a repulsive axon guidance cue that contributes to commissural axon guidance to the midline (By similarity). Required for neuron survival through the modulation of MAPK signaling pathways too (PubMed:12941464). Involved in the regulation of hypothalamic GNRH secretion and the control of puberty (PubMed:18547942).</text>
</comment>
<comment type="function">
    <text evidence="1">Epididymal-secreted protein that signals through a ROS1-pathway to regulate the epididymal initial segment (IS) maturation, sperm maturation and male fertility.</text>
</comment>
<comment type="function">
    <molecule>Isoform 2</molecule>
    <text evidence="13">Acts as an endogenous inhibitor of PRKCB in glia.</text>
</comment>
<comment type="subunit">
    <text evidence="1 7 8 9 13">Homotrimer (PubMed:10548494). Binds to PRKCB (PubMed:10600492, PubMed:12941464, PubMed:25450684). Interacts with NICOL1; this interaction triggers epididymal differentiation (By similarity).</text>
</comment>
<comment type="subunit">
    <molecule>Isoform 2</molecule>
    <text evidence="10 13">Binds to PRKCB.</text>
</comment>
<comment type="subcellular location">
    <molecule>Isoform 1</molecule>
    <subcellularLocation>
        <location evidence="7 10 11">Secreted</location>
    </subcellularLocation>
</comment>
<comment type="subcellular location">
    <molecule>Isoform 2</molecule>
    <subcellularLocation>
        <location evidence="10">Cytoplasm</location>
    </subcellularLocation>
</comment>
<comment type="subcellular location">
    <molecule>Isoform 3</molecule>
    <subcellularLocation>
        <location evidence="12">Secreted</location>
    </subcellularLocation>
</comment>
<comment type="alternative products">
    <event type="alternative splicing"/>
    <isoform>
        <id>Q62918-1</id>
        <name>1</name>
        <sequence type="displayed"/>
    </isoform>
    <isoform>
        <id>Q62918-2</id>
        <name>2</name>
        <name evidence="15">cNELL2</name>
        <sequence type="described" ref="VSP_062042"/>
    </isoform>
    <isoform>
        <id>Q62918-3</id>
        <name>3</name>
        <name evidence="16">NELL2-Tsp</name>
        <sequence type="described" ref="VSP_062043"/>
    </isoform>
</comment>
<comment type="tissue specificity">
    <molecule>Isoform 2</molecule>
    <text evidence="10 13">Widely expressed (PubMed:17196548). Expressed in cortical astrocytes but not in neuron (PubMed:25450684).</text>
</comment>
<comment type="tissue specificity">
    <text evidence="11">Widely expressed in brain (PubMed:18547942). High expression is observed in telencephalic and diencephalic glutamatergic neurons, while no expression is found in GABAergic and GNRH neurons (PubMed:18547942).</text>
</comment>
<comment type="caution">
    <text evidence="17">It is uncertain whether Met-1 or Met-4 is the initiator.</text>
</comment>
<comment type="sequence caution" evidence="17">
    <conflict type="erroneous initiation">
        <sequence resource="EMBL-CDS" id="AAC72245"/>
    </conflict>
    <text>Truncated N-terminus.</text>
</comment>
<comment type="sequence caution" evidence="17">
    <conflict type="erroneous initiation">
        <sequence resource="EMBL-CDS" id="AAL89577"/>
    </conflict>
    <text>Truncated N-terminus.</text>
</comment>
<comment type="sequence caution" evidence="17">
    <conflict type="erroneous initiation">
        <sequence resource="EMBL-CDS" id="ABL61253"/>
    </conflict>
    <text>Truncated N-terminus.</text>
</comment>
<comment type="sequence caution" evidence="17">
    <conflict type="erroneous initiation">
        <sequence resource="EMBL-CDS" id="ACU68930"/>
    </conflict>
    <text>Truncated N-terminus.</text>
</comment>
<organism>
    <name type="scientific">Rattus norvegicus</name>
    <name type="common">Rat</name>
    <dbReference type="NCBI Taxonomy" id="10116"/>
    <lineage>
        <taxon>Eukaryota</taxon>
        <taxon>Metazoa</taxon>
        <taxon>Chordata</taxon>
        <taxon>Craniata</taxon>
        <taxon>Vertebrata</taxon>
        <taxon>Euteleostomi</taxon>
        <taxon>Mammalia</taxon>
        <taxon>Eutheria</taxon>
        <taxon>Euarchontoglires</taxon>
        <taxon>Glires</taxon>
        <taxon>Rodentia</taxon>
        <taxon>Myomorpha</taxon>
        <taxon>Muroidea</taxon>
        <taxon>Muridae</taxon>
        <taxon>Murinae</taxon>
        <taxon>Rattus</taxon>
    </lineage>
</organism>
<keyword id="KW-0025">Alternative splicing</keyword>
<keyword id="KW-0106">Calcium</keyword>
<keyword id="KW-0963">Cytoplasm</keyword>
<keyword id="KW-1015">Disulfide bond</keyword>
<keyword id="KW-0245">EGF-like domain</keyword>
<keyword id="KW-0325">Glycoprotein</keyword>
<keyword id="KW-0479">Metal-binding</keyword>
<keyword id="KW-1185">Reference proteome</keyword>
<keyword id="KW-0677">Repeat</keyword>
<keyword id="KW-0964">Secreted</keyword>
<keyword id="KW-0732">Signal</keyword>
<evidence type="ECO:0000250" key="1">
    <source>
        <dbReference type="UniProtKB" id="Q61220"/>
    </source>
</evidence>
<evidence type="ECO:0000250" key="2">
    <source>
        <dbReference type="UniProtKB" id="Q99435"/>
    </source>
</evidence>
<evidence type="ECO:0000255" key="3"/>
<evidence type="ECO:0000255" key="4">
    <source>
        <dbReference type="PROSITE-ProRule" id="PRU00076"/>
    </source>
</evidence>
<evidence type="ECO:0000255" key="5">
    <source>
        <dbReference type="PROSITE-ProRule" id="PRU00122"/>
    </source>
</evidence>
<evidence type="ECO:0000255" key="6">
    <source>
        <dbReference type="PROSITE-ProRule" id="PRU00220"/>
    </source>
</evidence>
<evidence type="ECO:0000269" key="7">
    <source>
    </source>
</evidence>
<evidence type="ECO:0000269" key="8">
    <source>
    </source>
</evidence>
<evidence type="ECO:0000269" key="9">
    <source>
    </source>
</evidence>
<evidence type="ECO:0000269" key="10">
    <source>
    </source>
</evidence>
<evidence type="ECO:0000269" key="11">
    <source>
    </source>
</evidence>
<evidence type="ECO:0000269" key="12">
    <source>
    </source>
</evidence>
<evidence type="ECO:0000269" key="13">
    <source>
    </source>
</evidence>
<evidence type="ECO:0000269" key="14">
    <source>
    </source>
</evidence>
<evidence type="ECO:0000303" key="15">
    <source>
    </source>
</evidence>
<evidence type="ECO:0000303" key="16">
    <source>
    </source>
</evidence>
<evidence type="ECO:0000305" key="17"/>
<gene>
    <name type="primary">Nell2</name>
    <name type="synonym">Nel</name>
</gene>
<proteinExistence type="evidence at protein level"/>
<feature type="signal peptide" evidence="2">
    <location>
        <begin position="1"/>
        <end position="24"/>
    </location>
</feature>
<feature type="chain" id="PRO_0000007668" description="Protein kinase C-binding protein NELL2">
    <location>
        <begin position="25"/>
        <end position="819"/>
    </location>
</feature>
<feature type="domain" description="Laminin G-like" evidence="5">
    <location>
        <begin position="58"/>
        <end position="231"/>
    </location>
</feature>
<feature type="domain" description="VWFC 1" evidence="6">
    <location>
        <begin position="275"/>
        <end position="334"/>
    </location>
</feature>
<feature type="domain" description="EGF-like 1" evidence="4">
    <location>
        <begin position="400"/>
        <end position="442"/>
    </location>
</feature>
<feature type="domain" description="EGF-like 2; calcium-binding" evidence="4">
    <location>
        <begin position="443"/>
        <end position="484"/>
    </location>
</feature>
<feature type="domain" description="EGF-like 3; calcium-binding" evidence="4">
    <location>
        <begin position="485"/>
        <end position="525"/>
    </location>
</feature>
<feature type="domain" description="EGF-like 4" evidence="4">
    <location>
        <begin position="526"/>
        <end position="556"/>
    </location>
</feature>
<feature type="domain" description="EGF-like 5; calcium-binding" evidence="4">
    <location>
        <begin position="558"/>
        <end position="604"/>
    </location>
</feature>
<feature type="domain" description="EGF-like 6; calcium-binding" evidence="4">
    <location>
        <begin position="605"/>
        <end position="640"/>
    </location>
</feature>
<feature type="domain" description="VWFC 2" evidence="6">
    <location>
        <begin position="641"/>
        <end position="696"/>
    </location>
</feature>
<feature type="domain" description="VWFC 3" evidence="6">
    <location>
        <begin position="701"/>
        <end position="759"/>
    </location>
</feature>
<feature type="binding site" evidence="2">
    <location>
        <position position="443"/>
    </location>
    <ligand>
        <name>Ca(2+)</name>
        <dbReference type="ChEBI" id="CHEBI:29108"/>
    </ligand>
</feature>
<feature type="binding site" evidence="2">
    <location>
        <position position="444"/>
    </location>
    <ligand>
        <name>Ca(2+)</name>
        <dbReference type="ChEBI" id="CHEBI:29108"/>
    </ligand>
</feature>
<feature type="binding site" evidence="2">
    <location>
        <position position="446"/>
    </location>
    <ligand>
        <name>Ca(2+)</name>
        <dbReference type="ChEBI" id="CHEBI:29108"/>
    </ligand>
</feature>
<feature type="binding site" evidence="2">
    <location>
        <position position="462"/>
    </location>
    <ligand>
        <name>Ca(2+)</name>
        <dbReference type="ChEBI" id="CHEBI:29108"/>
    </ligand>
</feature>
<feature type="binding site" evidence="2">
    <location>
        <position position="463"/>
    </location>
    <ligand>
        <name>Ca(2+)</name>
        <dbReference type="ChEBI" id="CHEBI:29108"/>
    </ligand>
</feature>
<feature type="binding site" evidence="2">
    <location>
        <position position="466"/>
    </location>
    <ligand>
        <name>Ca(2+)</name>
        <dbReference type="ChEBI" id="CHEBI:29108"/>
    </ligand>
</feature>
<feature type="binding site" evidence="2">
    <location>
        <position position="558"/>
    </location>
    <ligand>
        <name>Ca(2+)</name>
        <dbReference type="ChEBI" id="CHEBI:29108"/>
    </ligand>
</feature>
<feature type="binding site" evidence="2">
    <location>
        <position position="559"/>
    </location>
    <ligand>
        <name>Ca(2+)</name>
        <dbReference type="ChEBI" id="CHEBI:29108"/>
    </ligand>
</feature>
<feature type="binding site" evidence="2">
    <location>
        <position position="561"/>
    </location>
    <ligand>
        <name>Ca(2+)</name>
        <dbReference type="ChEBI" id="CHEBI:29108"/>
    </ligand>
</feature>
<feature type="binding site" evidence="2">
    <location>
        <position position="577"/>
    </location>
    <ligand>
        <name>Ca(2+)</name>
        <dbReference type="ChEBI" id="CHEBI:29108"/>
    </ligand>
</feature>
<feature type="binding site" evidence="2">
    <location>
        <position position="578"/>
    </location>
    <ligand>
        <name>Ca(2+)</name>
        <dbReference type="ChEBI" id="CHEBI:29108"/>
    </ligand>
</feature>
<feature type="binding site" evidence="2">
    <location>
        <position position="581"/>
    </location>
    <ligand>
        <name>Ca(2+)</name>
        <dbReference type="ChEBI" id="CHEBI:29108"/>
    </ligand>
</feature>
<feature type="binding site" evidence="2">
    <location>
        <position position="605"/>
    </location>
    <ligand>
        <name>Ca(2+)</name>
        <dbReference type="ChEBI" id="CHEBI:29108"/>
    </ligand>
</feature>
<feature type="binding site" evidence="2">
    <location>
        <position position="606"/>
    </location>
    <ligand>
        <name>Ca(2+)</name>
        <dbReference type="ChEBI" id="CHEBI:29108"/>
    </ligand>
</feature>
<feature type="binding site" evidence="2">
    <location>
        <position position="608"/>
    </location>
    <ligand>
        <name>Ca(2+)</name>
        <dbReference type="ChEBI" id="CHEBI:29108"/>
    </ligand>
</feature>
<feature type="binding site" evidence="2">
    <location>
        <position position="624"/>
    </location>
    <ligand>
        <name>Ca(2+)</name>
        <dbReference type="ChEBI" id="CHEBI:29108"/>
    </ligand>
</feature>
<feature type="binding site" evidence="2">
    <location>
        <position position="625"/>
    </location>
    <ligand>
        <name>Ca(2+)</name>
        <dbReference type="ChEBI" id="CHEBI:29108"/>
    </ligand>
</feature>
<feature type="binding site" evidence="2">
    <location>
        <position position="628"/>
    </location>
    <ligand>
        <name>Ca(2+)</name>
        <dbReference type="ChEBI" id="CHEBI:29108"/>
    </ligand>
</feature>
<feature type="glycosylation site" description="N-linked (GlcNAc...) asparagine" evidence="3">
    <location>
        <position position="56"/>
    </location>
</feature>
<feature type="glycosylation site" description="N-linked (GlcNAc...) asparagine" evidence="3">
    <location>
        <position position="228"/>
    </location>
</feature>
<feature type="glycosylation site" description="N-linked (GlcNAc...) asparagine" evidence="3">
    <location>
        <position position="296"/>
    </location>
</feature>
<feature type="glycosylation site" description="N-linked (GlcNAc...) asparagine" evidence="3">
    <location>
        <position position="301"/>
    </location>
</feature>
<feature type="glycosylation site" description="N-linked (GlcNAc...) asparagine" evidence="2">
    <location>
        <position position="520"/>
    </location>
</feature>
<feature type="glycosylation site" description="O-linked (GlcNAc...) threonine" evidence="2">
    <location>
        <position position="551"/>
    </location>
</feature>
<feature type="glycosylation site" description="N-linked (GlcNAc...) asparagine" evidence="3">
    <location>
        <position position="618"/>
    </location>
</feature>
<feature type="glycosylation site" description="N-linked (GlcNAc...) asparagine" evidence="3">
    <location>
        <position position="638"/>
    </location>
</feature>
<feature type="disulfide bond" evidence="2">
    <location>
        <begin position="404"/>
        <end position="416"/>
    </location>
</feature>
<feature type="disulfide bond" evidence="2">
    <location>
        <begin position="410"/>
        <end position="425"/>
    </location>
</feature>
<feature type="disulfide bond" evidence="2">
    <location>
        <begin position="427"/>
        <end position="441"/>
    </location>
</feature>
<feature type="disulfide bond" evidence="2">
    <location>
        <begin position="447"/>
        <end position="460"/>
    </location>
</feature>
<feature type="disulfide bond" evidence="2">
    <location>
        <begin position="454"/>
        <end position="469"/>
    </location>
</feature>
<feature type="disulfide bond" evidence="2">
    <location>
        <begin position="471"/>
        <end position="483"/>
    </location>
</feature>
<feature type="disulfide bond" evidence="2">
    <location>
        <begin position="489"/>
        <end position="502"/>
    </location>
</feature>
<feature type="disulfide bond" evidence="2">
    <location>
        <begin position="496"/>
        <end position="511"/>
    </location>
</feature>
<feature type="disulfide bond" evidence="2">
    <location>
        <begin position="513"/>
        <end position="524"/>
    </location>
</feature>
<feature type="disulfide bond" evidence="2">
    <location>
        <begin position="528"/>
        <end position="538"/>
    </location>
</feature>
<feature type="disulfide bond" evidence="2">
    <location>
        <begin position="532"/>
        <end position="544"/>
    </location>
</feature>
<feature type="disulfide bond" evidence="2">
    <location>
        <begin position="546"/>
        <end position="555"/>
    </location>
</feature>
<feature type="disulfide bond" evidence="2">
    <location>
        <begin position="562"/>
        <end position="575"/>
    </location>
</feature>
<feature type="disulfide bond" evidence="2">
    <location>
        <begin position="569"/>
        <end position="584"/>
    </location>
</feature>
<feature type="disulfide bond" evidence="2">
    <location>
        <begin position="586"/>
        <end position="603"/>
    </location>
</feature>
<feature type="disulfide bond" evidence="2">
    <location>
        <begin position="609"/>
        <end position="622"/>
    </location>
</feature>
<feature type="disulfide bond" evidence="2">
    <location>
        <begin position="616"/>
        <end position="631"/>
    </location>
</feature>
<feature type="disulfide bond" evidence="2">
    <location>
        <begin position="633"/>
        <end position="639"/>
    </location>
</feature>
<feature type="splice variant" id="VSP_062042" description="In isoform 2.">
    <location>
        <begin position="22"/>
        <end position="64"/>
    </location>
</feature>
<feature type="splice variant" id="VSP_062043" description="In isoform 3.">
    <location>
        <begin position="262"/>
        <end position="819"/>
    </location>
</feature>
<feature type="sequence conflict" description="In Ref. 1; AAC72245 and 2; AAL89577." evidence="17" ref="1 2">
    <original>T</original>
    <variation>A</variation>
    <location>
        <position position="282"/>
    </location>
</feature>
<feature type="sequence conflict" description="In Ref. 1; AAC72245." evidence="17" ref="1">
    <original>R</original>
    <variation>K</variation>
    <location>
        <position position="533"/>
    </location>
</feature>
<feature type="sequence conflict" description="In Ref. 1; AAC72245." evidence="17" ref="1">
    <original>R</original>
    <variation>Q</variation>
    <location>
        <position position="676"/>
    </location>
</feature>
<feature type="sequence conflict" description="In Ref. 1; AAC72245." evidence="17" ref="1">
    <original>V</original>
    <variation>A</variation>
    <location>
        <position position="719"/>
    </location>
</feature>
<feature type="sequence conflict" description="In Ref. 1; AAC72245." evidence="17" ref="1">
    <original>G</original>
    <variation>E</variation>
    <location>
        <position position="730"/>
    </location>
</feature>